<accession>Q3SFS6</accession>
<evidence type="ECO:0000255" key="1">
    <source>
        <dbReference type="HAMAP-Rule" id="MF_01855"/>
    </source>
</evidence>
<comment type="catalytic activity">
    <reaction evidence="1">
        <text>beta-D-fructose 1,6-bisphosphate + H2O = beta-D-fructose 6-phosphate + phosphate</text>
        <dbReference type="Rhea" id="RHEA:11064"/>
        <dbReference type="ChEBI" id="CHEBI:15377"/>
        <dbReference type="ChEBI" id="CHEBI:32966"/>
        <dbReference type="ChEBI" id="CHEBI:43474"/>
        <dbReference type="ChEBI" id="CHEBI:57634"/>
        <dbReference type="EC" id="3.1.3.11"/>
    </reaction>
</comment>
<comment type="cofactor">
    <cofactor evidence="1">
        <name>Mg(2+)</name>
        <dbReference type="ChEBI" id="CHEBI:18420"/>
    </cofactor>
    <text evidence="1">Binds 2 magnesium ions per subunit.</text>
</comment>
<comment type="pathway">
    <text evidence="1">Carbohydrate biosynthesis; gluconeogenesis.</text>
</comment>
<comment type="subunit">
    <text evidence="1">Homotetramer.</text>
</comment>
<comment type="subcellular location">
    <subcellularLocation>
        <location evidence="1">Cytoplasm</location>
    </subcellularLocation>
</comment>
<comment type="similarity">
    <text evidence="1">Belongs to the FBPase class 1 family.</text>
</comment>
<sequence>MHTGTTLTQFIIEEQRRTAGATGDFTSLLNDVVTACKAISNAVNKGALLGVMGALESENVQGETQKKLDVITNDIMIRSNEWAGHLAGMASEEMDDVYAIPGQYPLGKYLLVFDPLDGSSNVDVNISVGTIFSILKAPVAGRAAKAEDFLQAGTKQVCAGYAIYGSSTMLVLTFGHGTNGFTLDRDVGEFVLTHPAMKIPTETKEFAINASNMRFWEKPVQRYVDECLAGKTGPRGKDFNMRWVASMVAEVHRILTRGGIFMYPKDTKDPSKAGKLRLMYEANPMAFIVEQAGGAATTGYQRILDIAPEGLHQRVPVILGSKTEVDTVTGYHHEKAA</sequence>
<keyword id="KW-0119">Carbohydrate metabolism</keyword>
<keyword id="KW-0963">Cytoplasm</keyword>
<keyword id="KW-0378">Hydrolase</keyword>
<keyword id="KW-0460">Magnesium</keyword>
<keyword id="KW-0479">Metal-binding</keyword>
<keyword id="KW-1185">Reference proteome</keyword>
<name>F16PA_THIDA</name>
<feature type="chain" id="PRO_0000364734" description="Fructose-1,6-bisphosphatase class 1">
    <location>
        <begin position="1"/>
        <end position="337"/>
    </location>
</feature>
<feature type="binding site" evidence="1">
    <location>
        <position position="92"/>
    </location>
    <ligand>
        <name>Mg(2+)</name>
        <dbReference type="ChEBI" id="CHEBI:18420"/>
        <label>1</label>
    </ligand>
</feature>
<feature type="binding site" evidence="1">
    <location>
        <position position="114"/>
    </location>
    <ligand>
        <name>Mg(2+)</name>
        <dbReference type="ChEBI" id="CHEBI:18420"/>
        <label>1</label>
    </ligand>
</feature>
<feature type="binding site" evidence="1">
    <location>
        <position position="114"/>
    </location>
    <ligand>
        <name>Mg(2+)</name>
        <dbReference type="ChEBI" id="CHEBI:18420"/>
        <label>2</label>
    </ligand>
</feature>
<feature type="binding site" evidence="1">
    <location>
        <position position="116"/>
    </location>
    <ligand>
        <name>Mg(2+)</name>
        <dbReference type="ChEBI" id="CHEBI:18420"/>
        <label>1</label>
    </ligand>
</feature>
<feature type="binding site" evidence="1">
    <location>
        <begin position="117"/>
        <end position="120"/>
    </location>
    <ligand>
        <name>substrate</name>
    </ligand>
</feature>
<feature type="binding site" evidence="1">
    <location>
        <position position="117"/>
    </location>
    <ligand>
        <name>Mg(2+)</name>
        <dbReference type="ChEBI" id="CHEBI:18420"/>
        <label>2</label>
    </ligand>
</feature>
<feature type="binding site" evidence="1">
    <location>
        <position position="209"/>
    </location>
    <ligand>
        <name>substrate</name>
    </ligand>
</feature>
<feature type="binding site" evidence="1">
    <location>
        <position position="275"/>
    </location>
    <ligand>
        <name>substrate</name>
    </ligand>
</feature>
<feature type="binding site" evidence="1">
    <location>
        <position position="281"/>
    </location>
    <ligand>
        <name>Mg(2+)</name>
        <dbReference type="ChEBI" id="CHEBI:18420"/>
        <label>2</label>
    </ligand>
</feature>
<protein>
    <recommendedName>
        <fullName evidence="1">Fructose-1,6-bisphosphatase class 1</fullName>
        <shortName evidence="1">FBPase class 1</shortName>
        <ecNumber evidence="1">3.1.3.11</ecNumber>
    </recommendedName>
    <alternativeName>
        <fullName evidence="1">D-fructose-1,6-bisphosphate 1-phosphohydrolase class 1</fullName>
    </alternativeName>
</protein>
<dbReference type="EC" id="3.1.3.11" evidence="1"/>
<dbReference type="EMBL" id="CP000116">
    <property type="protein sequence ID" value="AAZ98530.1"/>
    <property type="molecule type" value="Genomic_DNA"/>
</dbReference>
<dbReference type="RefSeq" id="WP_011313089.1">
    <property type="nucleotide sequence ID" value="NC_007404.1"/>
</dbReference>
<dbReference type="SMR" id="Q3SFS6"/>
<dbReference type="STRING" id="292415.Tbd_2577"/>
<dbReference type="KEGG" id="tbd:Tbd_2577"/>
<dbReference type="eggNOG" id="COG0158">
    <property type="taxonomic scope" value="Bacteria"/>
</dbReference>
<dbReference type="HOGENOM" id="CLU_039977_0_0_4"/>
<dbReference type="OrthoDB" id="9806756at2"/>
<dbReference type="UniPathway" id="UPA00138"/>
<dbReference type="Proteomes" id="UP000008291">
    <property type="component" value="Chromosome"/>
</dbReference>
<dbReference type="GO" id="GO:0005829">
    <property type="term" value="C:cytosol"/>
    <property type="evidence" value="ECO:0007669"/>
    <property type="project" value="TreeGrafter"/>
</dbReference>
<dbReference type="GO" id="GO:0042132">
    <property type="term" value="F:fructose 1,6-bisphosphate 1-phosphatase activity"/>
    <property type="evidence" value="ECO:0007669"/>
    <property type="project" value="UniProtKB-UniRule"/>
</dbReference>
<dbReference type="GO" id="GO:0000287">
    <property type="term" value="F:magnesium ion binding"/>
    <property type="evidence" value="ECO:0007669"/>
    <property type="project" value="UniProtKB-UniRule"/>
</dbReference>
<dbReference type="GO" id="GO:0030388">
    <property type="term" value="P:fructose 1,6-bisphosphate metabolic process"/>
    <property type="evidence" value="ECO:0007669"/>
    <property type="project" value="TreeGrafter"/>
</dbReference>
<dbReference type="GO" id="GO:0006002">
    <property type="term" value="P:fructose 6-phosphate metabolic process"/>
    <property type="evidence" value="ECO:0007669"/>
    <property type="project" value="TreeGrafter"/>
</dbReference>
<dbReference type="GO" id="GO:0006000">
    <property type="term" value="P:fructose metabolic process"/>
    <property type="evidence" value="ECO:0007669"/>
    <property type="project" value="TreeGrafter"/>
</dbReference>
<dbReference type="GO" id="GO:0006094">
    <property type="term" value="P:gluconeogenesis"/>
    <property type="evidence" value="ECO:0007669"/>
    <property type="project" value="UniProtKB-UniRule"/>
</dbReference>
<dbReference type="GO" id="GO:0005986">
    <property type="term" value="P:sucrose biosynthetic process"/>
    <property type="evidence" value="ECO:0007669"/>
    <property type="project" value="TreeGrafter"/>
</dbReference>
<dbReference type="CDD" id="cd00354">
    <property type="entry name" value="FBPase"/>
    <property type="match status" value="1"/>
</dbReference>
<dbReference type="FunFam" id="3.30.540.10:FF:000006">
    <property type="entry name" value="Fructose-1,6-bisphosphatase class 1"/>
    <property type="match status" value="1"/>
</dbReference>
<dbReference type="FunFam" id="3.40.190.80:FF:000011">
    <property type="entry name" value="Fructose-1,6-bisphosphatase class 1"/>
    <property type="match status" value="1"/>
</dbReference>
<dbReference type="Gene3D" id="3.40.190.80">
    <property type="match status" value="1"/>
</dbReference>
<dbReference type="Gene3D" id="3.30.540.10">
    <property type="entry name" value="Fructose-1,6-Bisphosphatase, subunit A, domain 1"/>
    <property type="match status" value="1"/>
</dbReference>
<dbReference type="HAMAP" id="MF_01855">
    <property type="entry name" value="FBPase_class1"/>
    <property type="match status" value="1"/>
</dbReference>
<dbReference type="InterPro" id="IPR044015">
    <property type="entry name" value="FBPase_C_dom"/>
</dbReference>
<dbReference type="InterPro" id="IPR000146">
    <property type="entry name" value="FBPase_class-1"/>
</dbReference>
<dbReference type="InterPro" id="IPR033391">
    <property type="entry name" value="FBPase_N"/>
</dbReference>
<dbReference type="InterPro" id="IPR028343">
    <property type="entry name" value="FBPtase"/>
</dbReference>
<dbReference type="NCBIfam" id="NF006778">
    <property type="entry name" value="PRK09293.1-1"/>
    <property type="match status" value="1"/>
</dbReference>
<dbReference type="NCBIfam" id="NF006779">
    <property type="entry name" value="PRK09293.1-3"/>
    <property type="match status" value="1"/>
</dbReference>
<dbReference type="NCBIfam" id="NF006780">
    <property type="entry name" value="PRK09293.1-4"/>
    <property type="match status" value="1"/>
</dbReference>
<dbReference type="PANTHER" id="PTHR11556">
    <property type="entry name" value="FRUCTOSE-1,6-BISPHOSPHATASE-RELATED"/>
    <property type="match status" value="1"/>
</dbReference>
<dbReference type="PANTHER" id="PTHR11556:SF35">
    <property type="entry name" value="SEDOHEPTULOSE-1,7-BISPHOSPHATASE, CHLOROPLASTIC"/>
    <property type="match status" value="1"/>
</dbReference>
<dbReference type="Pfam" id="PF00316">
    <property type="entry name" value="FBPase"/>
    <property type="match status" value="1"/>
</dbReference>
<dbReference type="Pfam" id="PF18913">
    <property type="entry name" value="FBPase_C"/>
    <property type="match status" value="1"/>
</dbReference>
<dbReference type="PIRSF" id="PIRSF500210">
    <property type="entry name" value="FBPtase"/>
    <property type="match status" value="1"/>
</dbReference>
<dbReference type="PIRSF" id="PIRSF000904">
    <property type="entry name" value="FBPtase_SBPase"/>
    <property type="match status" value="1"/>
</dbReference>
<dbReference type="PRINTS" id="PR00115">
    <property type="entry name" value="F16BPHPHTASE"/>
</dbReference>
<dbReference type="SUPFAM" id="SSF56655">
    <property type="entry name" value="Carbohydrate phosphatase"/>
    <property type="match status" value="1"/>
</dbReference>
<reference key="1">
    <citation type="journal article" date="2006" name="J. Bacteriol.">
        <title>The genome sequence of the obligately chemolithoautotrophic, facultatively anaerobic bacterium Thiobacillus denitrificans.</title>
        <authorList>
            <person name="Beller H.R."/>
            <person name="Chain P.S."/>
            <person name="Letain T.E."/>
            <person name="Chakicherla A."/>
            <person name="Larimer F.W."/>
            <person name="Richardson P.M."/>
            <person name="Coleman M.A."/>
            <person name="Wood A.P."/>
            <person name="Kelly D.P."/>
        </authorList>
    </citation>
    <scope>NUCLEOTIDE SEQUENCE [LARGE SCALE GENOMIC DNA]</scope>
    <source>
        <strain>ATCC 25259 / T1</strain>
    </source>
</reference>
<proteinExistence type="inferred from homology"/>
<organism>
    <name type="scientific">Thiobacillus denitrificans (strain ATCC 25259 / T1)</name>
    <dbReference type="NCBI Taxonomy" id="292415"/>
    <lineage>
        <taxon>Bacteria</taxon>
        <taxon>Pseudomonadati</taxon>
        <taxon>Pseudomonadota</taxon>
        <taxon>Betaproteobacteria</taxon>
        <taxon>Nitrosomonadales</taxon>
        <taxon>Thiobacillaceae</taxon>
        <taxon>Thiobacillus</taxon>
    </lineage>
</organism>
<gene>
    <name evidence="1" type="primary">fbp</name>
    <name type="ordered locus">Tbd_2577</name>
</gene>